<protein>
    <recommendedName>
        <fullName evidence="3">U1-poneritoxin-Da2a</fullName>
        <shortName evidence="3">U1-PONTX-Da2a</shortName>
    </recommendedName>
    <alternativeName>
        <fullName evidence="2">Dinoponeratoxin Da-1837</fullName>
    </alternativeName>
    <alternativeName>
        <fullName evidence="4">Poneratoxin</fullName>
    </alternativeName>
</protein>
<comment type="function">
    <text evidence="4">May have antimicrobial properties, like most ant linear peptides.</text>
</comment>
<comment type="subcellular location">
    <subcellularLocation>
        <location evidence="1">Secreted</location>
    </subcellularLocation>
</comment>
<comment type="tissue specificity">
    <text evidence="5">Expressed by the venom gland.</text>
</comment>
<comment type="mass spectrometry" mass="1837.1" method="Electrospray" evidence="1"/>
<accession>P0CF03</accession>
<sequence length="18" mass="1839">FLGGLIGPLMSLIPGLLK</sequence>
<feature type="peptide" id="PRO_0000393347" description="U1-poneritoxin-Da2a" evidence="1">
    <location>
        <begin position="1"/>
        <end position="18"/>
    </location>
</feature>
<feature type="modified residue" description="Lysine amide" evidence="1">
    <location>
        <position position="18"/>
    </location>
</feature>
<reference key="1">
    <citation type="journal article" date="2010" name="Toxicon">
        <title>A biochemical characterization of the major peptides from the venom of the giant Neotropical hunting ant Dinoponera australis.</title>
        <authorList>
            <person name="Johnson S.R."/>
            <person name="Copello J.A."/>
            <person name="Evans M.S."/>
            <person name="Suarez A.V."/>
        </authorList>
    </citation>
    <scope>PROTEIN SEQUENCE</scope>
    <scope>MASS SPECTROMETRY</scope>
    <scope>SYNTHESIS</scope>
    <scope>AMIDATION AT LYS-18</scope>
    <scope>SUBCELLULAR LOCATION</scope>
    <source>
        <tissue>Venom</tissue>
    </source>
</reference>
<reference key="2">
    <citation type="journal article" date="2016" name="Toxins">
        <title>The biochemical toxin arsenal from ant venoms.</title>
        <authorList>
            <person name="Touchard A."/>
            <person name="Aili S.R."/>
            <person name="Fox E.G."/>
            <person name="Escoubas P."/>
            <person name="Orivel J."/>
            <person name="Nicholson G.M."/>
            <person name="Dejean A."/>
        </authorList>
    </citation>
    <scope>REVIEW</scope>
    <scope>NOMENCLATURE</scope>
</reference>
<proteinExistence type="evidence at protein level"/>
<organism>
    <name type="scientific">Dinoponera australis</name>
    <name type="common">Giant neotropical hunting ant</name>
    <dbReference type="NCBI Taxonomy" id="609289"/>
    <lineage>
        <taxon>Eukaryota</taxon>
        <taxon>Metazoa</taxon>
        <taxon>Ecdysozoa</taxon>
        <taxon>Arthropoda</taxon>
        <taxon>Hexapoda</taxon>
        <taxon>Insecta</taxon>
        <taxon>Pterygota</taxon>
        <taxon>Neoptera</taxon>
        <taxon>Endopterygota</taxon>
        <taxon>Hymenoptera</taxon>
        <taxon>Apocrita</taxon>
        <taxon>Aculeata</taxon>
        <taxon>Formicoidea</taxon>
        <taxon>Formicidae</taxon>
        <taxon>Ponerinae</taxon>
        <taxon>Ponerini</taxon>
        <taxon>Dinoponera</taxon>
    </lineage>
</organism>
<name>TX2A_DINAS</name>
<keyword id="KW-0027">Amidation</keyword>
<keyword id="KW-0929">Antimicrobial</keyword>
<keyword id="KW-0903">Direct protein sequencing</keyword>
<keyword id="KW-0964">Secreted</keyword>
<dbReference type="GO" id="GO:0005576">
    <property type="term" value="C:extracellular region"/>
    <property type="evidence" value="ECO:0007669"/>
    <property type="project" value="UniProtKB-SubCell"/>
</dbReference>
<evidence type="ECO:0000269" key="1">
    <source>
    </source>
</evidence>
<evidence type="ECO:0000303" key="2">
    <source>
    </source>
</evidence>
<evidence type="ECO:0000303" key="3">
    <source>
    </source>
</evidence>
<evidence type="ECO:0000305" key="4"/>
<evidence type="ECO:0000305" key="5">
    <source>
    </source>
</evidence>